<comment type="function">
    <text evidence="1">Catalyzes the condensation of pantoate with beta-alanine in an ATP-dependent reaction via a pantoyl-adenylate intermediate.</text>
</comment>
<comment type="catalytic activity">
    <reaction evidence="1">
        <text>(R)-pantoate + beta-alanine + ATP = (R)-pantothenate + AMP + diphosphate + H(+)</text>
        <dbReference type="Rhea" id="RHEA:10912"/>
        <dbReference type="ChEBI" id="CHEBI:15378"/>
        <dbReference type="ChEBI" id="CHEBI:15980"/>
        <dbReference type="ChEBI" id="CHEBI:29032"/>
        <dbReference type="ChEBI" id="CHEBI:30616"/>
        <dbReference type="ChEBI" id="CHEBI:33019"/>
        <dbReference type="ChEBI" id="CHEBI:57966"/>
        <dbReference type="ChEBI" id="CHEBI:456215"/>
        <dbReference type="EC" id="6.3.2.1"/>
    </reaction>
</comment>
<comment type="pathway">
    <text evidence="1">Cofactor biosynthesis; (R)-pantothenate biosynthesis; (R)-pantothenate from (R)-pantoate and beta-alanine: step 1/1.</text>
</comment>
<comment type="subunit">
    <text evidence="1">Homodimer.</text>
</comment>
<comment type="subcellular location">
    <subcellularLocation>
        <location evidence="1">Cytoplasm</location>
    </subcellularLocation>
</comment>
<comment type="miscellaneous">
    <text evidence="1">The reaction proceeds by a bi uni uni bi ping pong mechanism.</text>
</comment>
<comment type="similarity">
    <text evidence="1">Belongs to the pantothenate synthetase family.</text>
</comment>
<sequence>MQIIHTIEELRQALAPARQQGKKIGFVPTMGYLHKGHLELVRRARVENDVTLVSIFVNPLQFGANEDLGRYPRDLERDAGLLHDAQVDYLFAPTVSDMYPRPMQTVVDVPPLGNQIEGEARPGHFAGVATVVSKLFNIVGPDAAYFGEKDFQQLVIIRRMVDDMAIPVRIVGVETVREDDGLACSSRNVYLTPEQRRAAIIVPQALDEADRLYRSGMDDPDALEAAIRTFIGRQPLAVPEVIAIRDPETLERLPALQGRPILVALFVRVGATRLLDNRVIGHAAPQITQERAA</sequence>
<name>PANC_BRUAB</name>
<accession>Q57F30</accession>
<gene>
    <name evidence="1" type="primary">panC</name>
    <name type="ordered locus">BruAb1_0355</name>
</gene>
<keyword id="KW-0067">ATP-binding</keyword>
<keyword id="KW-0963">Cytoplasm</keyword>
<keyword id="KW-0436">Ligase</keyword>
<keyword id="KW-0547">Nucleotide-binding</keyword>
<keyword id="KW-0566">Pantothenate biosynthesis</keyword>
<proteinExistence type="inferred from homology"/>
<dbReference type="EC" id="6.3.2.1" evidence="1"/>
<dbReference type="EMBL" id="AE017223">
    <property type="protein sequence ID" value="AAX73754.1"/>
    <property type="molecule type" value="Genomic_DNA"/>
</dbReference>
<dbReference type="RefSeq" id="WP_002963494.1">
    <property type="nucleotide sequence ID" value="NC_006932.1"/>
</dbReference>
<dbReference type="SMR" id="Q57F30"/>
<dbReference type="EnsemblBacteria" id="AAX73754">
    <property type="protein sequence ID" value="AAX73754"/>
    <property type="gene ID" value="BruAb1_0355"/>
</dbReference>
<dbReference type="GeneID" id="93017206"/>
<dbReference type="KEGG" id="bmb:BruAb1_0355"/>
<dbReference type="HOGENOM" id="CLU_047148_0_0_5"/>
<dbReference type="UniPathway" id="UPA00028">
    <property type="reaction ID" value="UER00005"/>
</dbReference>
<dbReference type="Proteomes" id="UP000000540">
    <property type="component" value="Chromosome I"/>
</dbReference>
<dbReference type="GO" id="GO:0005829">
    <property type="term" value="C:cytosol"/>
    <property type="evidence" value="ECO:0007669"/>
    <property type="project" value="TreeGrafter"/>
</dbReference>
<dbReference type="GO" id="GO:0005524">
    <property type="term" value="F:ATP binding"/>
    <property type="evidence" value="ECO:0007669"/>
    <property type="project" value="UniProtKB-KW"/>
</dbReference>
<dbReference type="GO" id="GO:0004592">
    <property type="term" value="F:pantoate-beta-alanine ligase activity"/>
    <property type="evidence" value="ECO:0007669"/>
    <property type="project" value="UniProtKB-UniRule"/>
</dbReference>
<dbReference type="GO" id="GO:0015940">
    <property type="term" value="P:pantothenate biosynthetic process"/>
    <property type="evidence" value="ECO:0007669"/>
    <property type="project" value="UniProtKB-UniRule"/>
</dbReference>
<dbReference type="CDD" id="cd00560">
    <property type="entry name" value="PanC"/>
    <property type="match status" value="1"/>
</dbReference>
<dbReference type="FunFam" id="3.40.50.620:FF:000013">
    <property type="entry name" value="Pantothenate synthetase"/>
    <property type="match status" value="1"/>
</dbReference>
<dbReference type="Gene3D" id="3.40.50.620">
    <property type="entry name" value="HUPs"/>
    <property type="match status" value="1"/>
</dbReference>
<dbReference type="Gene3D" id="3.30.1300.10">
    <property type="entry name" value="Pantoate-beta-alanine ligase, C-terminal domain"/>
    <property type="match status" value="1"/>
</dbReference>
<dbReference type="HAMAP" id="MF_00158">
    <property type="entry name" value="PanC"/>
    <property type="match status" value="1"/>
</dbReference>
<dbReference type="InterPro" id="IPR004821">
    <property type="entry name" value="Cyt_trans-like"/>
</dbReference>
<dbReference type="InterPro" id="IPR003721">
    <property type="entry name" value="Pantoate_ligase"/>
</dbReference>
<dbReference type="InterPro" id="IPR042176">
    <property type="entry name" value="Pantoate_ligase_C"/>
</dbReference>
<dbReference type="InterPro" id="IPR014729">
    <property type="entry name" value="Rossmann-like_a/b/a_fold"/>
</dbReference>
<dbReference type="NCBIfam" id="TIGR00125">
    <property type="entry name" value="cyt_tran_rel"/>
    <property type="match status" value="1"/>
</dbReference>
<dbReference type="NCBIfam" id="TIGR00018">
    <property type="entry name" value="panC"/>
    <property type="match status" value="1"/>
</dbReference>
<dbReference type="PANTHER" id="PTHR21299">
    <property type="entry name" value="CYTIDYLATE KINASE/PANTOATE-BETA-ALANINE LIGASE"/>
    <property type="match status" value="1"/>
</dbReference>
<dbReference type="PANTHER" id="PTHR21299:SF1">
    <property type="entry name" value="PANTOATE--BETA-ALANINE LIGASE"/>
    <property type="match status" value="1"/>
</dbReference>
<dbReference type="Pfam" id="PF02569">
    <property type="entry name" value="Pantoate_ligase"/>
    <property type="match status" value="1"/>
</dbReference>
<dbReference type="SUPFAM" id="SSF52374">
    <property type="entry name" value="Nucleotidylyl transferase"/>
    <property type="match status" value="1"/>
</dbReference>
<feature type="chain" id="PRO_0000128209" description="Pantothenate synthetase">
    <location>
        <begin position="1"/>
        <end position="293"/>
    </location>
</feature>
<feature type="active site" description="Proton donor" evidence="1">
    <location>
        <position position="37"/>
    </location>
</feature>
<feature type="binding site" evidence="1">
    <location>
        <begin position="30"/>
        <end position="37"/>
    </location>
    <ligand>
        <name>ATP</name>
        <dbReference type="ChEBI" id="CHEBI:30616"/>
    </ligand>
</feature>
<feature type="binding site" evidence="1">
    <location>
        <position position="61"/>
    </location>
    <ligand>
        <name>(R)-pantoate</name>
        <dbReference type="ChEBI" id="CHEBI:15980"/>
    </ligand>
</feature>
<feature type="binding site" evidence="1">
    <location>
        <position position="61"/>
    </location>
    <ligand>
        <name>beta-alanine</name>
        <dbReference type="ChEBI" id="CHEBI:57966"/>
    </ligand>
</feature>
<feature type="binding site" evidence="1">
    <location>
        <begin position="147"/>
        <end position="150"/>
    </location>
    <ligand>
        <name>ATP</name>
        <dbReference type="ChEBI" id="CHEBI:30616"/>
    </ligand>
</feature>
<feature type="binding site" evidence="1">
    <location>
        <position position="153"/>
    </location>
    <ligand>
        <name>(R)-pantoate</name>
        <dbReference type="ChEBI" id="CHEBI:15980"/>
    </ligand>
</feature>
<feature type="binding site" evidence="1">
    <location>
        <position position="176"/>
    </location>
    <ligand>
        <name>ATP</name>
        <dbReference type="ChEBI" id="CHEBI:30616"/>
    </ligand>
</feature>
<feature type="binding site" evidence="1">
    <location>
        <begin position="184"/>
        <end position="187"/>
    </location>
    <ligand>
        <name>ATP</name>
        <dbReference type="ChEBI" id="CHEBI:30616"/>
    </ligand>
</feature>
<organism>
    <name type="scientific">Brucella abortus biovar 1 (strain 9-941)</name>
    <dbReference type="NCBI Taxonomy" id="262698"/>
    <lineage>
        <taxon>Bacteria</taxon>
        <taxon>Pseudomonadati</taxon>
        <taxon>Pseudomonadota</taxon>
        <taxon>Alphaproteobacteria</taxon>
        <taxon>Hyphomicrobiales</taxon>
        <taxon>Brucellaceae</taxon>
        <taxon>Brucella/Ochrobactrum group</taxon>
        <taxon>Brucella</taxon>
    </lineage>
</organism>
<evidence type="ECO:0000255" key="1">
    <source>
        <dbReference type="HAMAP-Rule" id="MF_00158"/>
    </source>
</evidence>
<reference key="1">
    <citation type="journal article" date="2005" name="J. Bacteriol.">
        <title>Completion of the genome sequence of Brucella abortus and comparison to the highly similar genomes of Brucella melitensis and Brucella suis.</title>
        <authorList>
            <person name="Halling S.M."/>
            <person name="Peterson-Burch B.D."/>
            <person name="Bricker B.J."/>
            <person name="Zuerner R.L."/>
            <person name="Qing Z."/>
            <person name="Li L.-L."/>
            <person name="Kapur V."/>
            <person name="Alt D.P."/>
            <person name="Olsen S.C."/>
        </authorList>
    </citation>
    <scope>NUCLEOTIDE SEQUENCE [LARGE SCALE GENOMIC DNA]</scope>
    <source>
        <strain>9-941</strain>
    </source>
</reference>
<protein>
    <recommendedName>
        <fullName evidence="1">Pantothenate synthetase</fullName>
        <shortName evidence="1">PS</shortName>
        <ecNumber evidence="1">6.3.2.1</ecNumber>
    </recommendedName>
    <alternativeName>
        <fullName evidence="1">Pantoate--beta-alanine ligase</fullName>
    </alternativeName>
    <alternativeName>
        <fullName evidence="1">Pantoate-activating enzyme</fullName>
    </alternativeName>
</protein>